<accession>Q9EX12</accession>
<comment type="function">
    <text evidence="1">Excises uracil residues from the DNA which can arise as a result of misincorporation of dUMP residues by DNA polymerase or due to deamination of cytosine.</text>
</comment>
<comment type="catalytic activity">
    <reaction>
        <text>Hydrolyzes single-stranded DNA or mismatched double-stranded DNA and polynucleotides, releasing free uracil.</text>
        <dbReference type="EC" id="3.2.2.27"/>
    </reaction>
</comment>
<comment type="subcellular location">
    <subcellularLocation>
        <location evidence="1">Cytoplasm</location>
    </subcellularLocation>
</comment>
<comment type="similarity">
    <text evidence="2">Belongs to the uracil-DNA glycosylase (UDG) superfamily. UNG family.</text>
</comment>
<feature type="chain" id="PRO_0000176149" description="Uracil-DNA glycosylase 1">
    <location>
        <begin position="1"/>
        <end position="225"/>
    </location>
</feature>
<feature type="active site" description="Proton acceptor" evidence="1">
    <location>
        <position position="68"/>
    </location>
</feature>
<dbReference type="EC" id="3.2.2.27"/>
<dbReference type="EMBL" id="AL939107">
    <property type="protein sequence ID" value="CAC13066.1"/>
    <property type="molecule type" value="Genomic_DNA"/>
</dbReference>
<dbReference type="RefSeq" id="NP_625407.1">
    <property type="nucleotide sequence ID" value="NC_003888.3"/>
</dbReference>
<dbReference type="RefSeq" id="WP_011027583.1">
    <property type="nucleotide sequence ID" value="NZ_VNID01000006.1"/>
</dbReference>
<dbReference type="SMR" id="Q9EX12"/>
<dbReference type="FunCoup" id="Q9EX12">
    <property type="interactions" value="190"/>
</dbReference>
<dbReference type="STRING" id="100226.gene:17758697"/>
<dbReference type="PaxDb" id="100226-SCO1114"/>
<dbReference type="KEGG" id="sco:SCO1114"/>
<dbReference type="PATRIC" id="fig|100226.15.peg.1111"/>
<dbReference type="eggNOG" id="COG0692">
    <property type="taxonomic scope" value="Bacteria"/>
</dbReference>
<dbReference type="HOGENOM" id="CLU_032162_3_1_11"/>
<dbReference type="InParanoid" id="Q9EX12"/>
<dbReference type="OrthoDB" id="9804372at2"/>
<dbReference type="PhylomeDB" id="Q9EX12"/>
<dbReference type="Proteomes" id="UP000001973">
    <property type="component" value="Chromosome"/>
</dbReference>
<dbReference type="GO" id="GO:0005737">
    <property type="term" value="C:cytoplasm"/>
    <property type="evidence" value="ECO:0007669"/>
    <property type="project" value="UniProtKB-SubCell"/>
</dbReference>
<dbReference type="GO" id="GO:0004844">
    <property type="term" value="F:uracil DNA N-glycosylase activity"/>
    <property type="evidence" value="ECO:0007669"/>
    <property type="project" value="UniProtKB-UniRule"/>
</dbReference>
<dbReference type="GO" id="GO:0097510">
    <property type="term" value="P:base-excision repair, AP site formation via deaminated base removal"/>
    <property type="evidence" value="ECO:0000318"/>
    <property type="project" value="GO_Central"/>
</dbReference>
<dbReference type="CDD" id="cd10027">
    <property type="entry name" value="UDG-F1-like"/>
    <property type="match status" value="1"/>
</dbReference>
<dbReference type="FunFam" id="3.40.470.10:FF:000006">
    <property type="entry name" value="Uracil-DNA glycosylase"/>
    <property type="match status" value="1"/>
</dbReference>
<dbReference type="Gene3D" id="3.40.470.10">
    <property type="entry name" value="Uracil-DNA glycosylase-like domain"/>
    <property type="match status" value="1"/>
</dbReference>
<dbReference type="HAMAP" id="MF_00148">
    <property type="entry name" value="UDG"/>
    <property type="match status" value="1"/>
</dbReference>
<dbReference type="InterPro" id="IPR002043">
    <property type="entry name" value="UDG_fam1"/>
</dbReference>
<dbReference type="InterPro" id="IPR018085">
    <property type="entry name" value="Ura-DNA_Glyclase_AS"/>
</dbReference>
<dbReference type="InterPro" id="IPR005122">
    <property type="entry name" value="Uracil-DNA_glycosylase-like"/>
</dbReference>
<dbReference type="InterPro" id="IPR036895">
    <property type="entry name" value="Uracil-DNA_glycosylase-like_sf"/>
</dbReference>
<dbReference type="NCBIfam" id="NF003588">
    <property type="entry name" value="PRK05254.1-1"/>
    <property type="match status" value="1"/>
</dbReference>
<dbReference type="NCBIfam" id="NF003592">
    <property type="entry name" value="PRK05254.1-5"/>
    <property type="match status" value="1"/>
</dbReference>
<dbReference type="PANTHER" id="PTHR11264">
    <property type="entry name" value="URACIL-DNA GLYCOSYLASE"/>
    <property type="match status" value="1"/>
</dbReference>
<dbReference type="PANTHER" id="PTHR11264:SF0">
    <property type="entry name" value="URACIL-DNA GLYCOSYLASE"/>
    <property type="match status" value="1"/>
</dbReference>
<dbReference type="Pfam" id="PF03167">
    <property type="entry name" value="UDG"/>
    <property type="match status" value="1"/>
</dbReference>
<dbReference type="SMART" id="SM00986">
    <property type="entry name" value="UDG"/>
    <property type="match status" value="1"/>
</dbReference>
<dbReference type="SMART" id="SM00987">
    <property type="entry name" value="UreE_C"/>
    <property type="match status" value="1"/>
</dbReference>
<dbReference type="SUPFAM" id="SSF52141">
    <property type="entry name" value="Uracil-DNA glycosylase-like"/>
    <property type="match status" value="1"/>
</dbReference>
<dbReference type="PROSITE" id="PS00130">
    <property type="entry name" value="U_DNA_GLYCOSYLASE"/>
    <property type="match status" value="1"/>
</dbReference>
<name>UNG1_STRCO</name>
<evidence type="ECO:0000250" key="1"/>
<evidence type="ECO:0000305" key="2"/>
<sequence>MAPRPLNEIVEAGWAKALEPVAGQITSMGEFLRAEIAAGRTYLPAGANVLRAFQQPFDDVRVLIVGQDPYPTPGHAVGLSFSVAPEVRPLPGSLVNIFRELNTDLNLPQPANGDLTPWTRQGVLLLNRALTTAPRKPAAHRGKGWEEVTEQAIRALAARGKPMVSILWGRDARNLRPLLGDLPALESAHPSPMSADRGFFGSRPFSRANDLLMRLGGQPVDWRLP</sequence>
<organism>
    <name type="scientific">Streptomyces coelicolor (strain ATCC BAA-471 / A3(2) / M145)</name>
    <dbReference type="NCBI Taxonomy" id="100226"/>
    <lineage>
        <taxon>Bacteria</taxon>
        <taxon>Bacillati</taxon>
        <taxon>Actinomycetota</taxon>
        <taxon>Actinomycetes</taxon>
        <taxon>Kitasatosporales</taxon>
        <taxon>Streptomycetaceae</taxon>
        <taxon>Streptomyces</taxon>
        <taxon>Streptomyces albidoflavus group</taxon>
    </lineage>
</organism>
<gene>
    <name type="primary">ung1</name>
    <name type="ordered locus">SCO1114</name>
    <name type="ORF">2SCG38.07</name>
</gene>
<proteinExistence type="inferred from homology"/>
<reference key="1">
    <citation type="journal article" date="2002" name="Nature">
        <title>Complete genome sequence of the model actinomycete Streptomyces coelicolor A3(2).</title>
        <authorList>
            <person name="Bentley S.D."/>
            <person name="Chater K.F."/>
            <person name="Cerdeno-Tarraga A.-M."/>
            <person name="Challis G.L."/>
            <person name="Thomson N.R."/>
            <person name="James K.D."/>
            <person name="Harris D.E."/>
            <person name="Quail M.A."/>
            <person name="Kieser H."/>
            <person name="Harper D."/>
            <person name="Bateman A."/>
            <person name="Brown S."/>
            <person name="Chandra G."/>
            <person name="Chen C.W."/>
            <person name="Collins M."/>
            <person name="Cronin A."/>
            <person name="Fraser A."/>
            <person name="Goble A."/>
            <person name="Hidalgo J."/>
            <person name="Hornsby T."/>
            <person name="Howarth S."/>
            <person name="Huang C.-H."/>
            <person name="Kieser T."/>
            <person name="Larke L."/>
            <person name="Murphy L.D."/>
            <person name="Oliver K."/>
            <person name="O'Neil S."/>
            <person name="Rabbinowitsch E."/>
            <person name="Rajandream M.A."/>
            <person name="Rutherford K.M."/>
            <person name="Rutter S."/>
            <person name="Seeger K."/>
            <person name="Saunders D."/>
            <person name="Sharp S."/>
            <person name="Squares R."/>
            <person name="Squares S."/>
            <person name="Taylor K."/>
            <person name="Warren T."/>
            <person name="Wietzorrek A."/>
            <person name="Woodward J.R."/>
            <person name="Barrell B.G."/>
            <person name="Parkhill J."/>
            <person name="Hopwood D.A."/>
        </authorList>
    </citation>
    <scope>NUCLEOTIDE SEQUENCE [LARGE SCALE GENOMIC DNA]</scope>
    <source>
        <strain>ATCC BAA-471 / A3(2) / M145</strain>
    </source>
</reference>
<keyword id="KW-0963">Cytoplasm</keyword>
<keyword id="KW-0227">DNA damage</keyword>
<keyword id="KW-0234">DNA repair</keyword>
<keyword id="KW-0378">Hydrolase</keyword>
<keyword id="KW-1185">Reference proteome</keyword>
<protein>
    <recommendedName>
        <fullName>Uracil-DNA glycosylase 1</fullName>
        <shortName>UDG 1</shortName>
        <ecNumber>3.2.2.27</ecNumber>
    </recommendedName>
</protein>